<dbReference type="EMBL" id="CP000804">
    <property type="protein sequence ID" value="ABU58095.1"/>
    <property type="molecule type" value="Genomic_DNA"/>
</dbReference>
<dbReference type="RefSeq" id="WP_012120519.1">
    <property type="nucleotide sequence ID" value="NC_009767.1"/>
</dbReference>
<dbReference type="SMR" id="A7NKS5"/>
<dbReference type="STRING" id="383372.Rcas_2007"/>
<dbReference type="KEGG" id="rca:Rcas_2007"/>
<dbReference type="eggNOG" id="COG0792">
    <property type="taxonomic scope" value="Bacteria"/>
</dbReference>
<dbReference type="HOGENOM" id="CLU_115353_2_1_0"/>
<dbReference type="OrthoDB" id="9802516at2"/>
<dbReference type="Proteomes" id="UP000000263">
    <property type="component" value="Chromosome"/>
</dbReference>
<dbReference type="GO" id="GO:0003676">
    <property type="term" value="F:nucleic acid binding"/>
    <property type="evidence" value="ECO:0007669"/>
    <property type="project" value="InterPro"/>
</dbReference>
<dbReference type="CDD" id="cd20736">
    <property type="entry name" value="PoNe_Nuclease"/>
    <property type="match status" value="1"/>
</dbReference>
<dbReference type="Gene3D" id="3.40.1350.10">
    <property type="match status" value="1"/>
</dbReference>
<dbReference type="HAMAP" id="MF_00048">
    <property type="entry name" value="UPF0102"/>
    <property type="match status" value="1"/>
</dbReference>
<dbReference type="InterPro" id="IPR011335">
    <property type="entry name" value="Restrct_endonuc-II-like"/>
</dbReference>
<dbReference type="InterPro" id="IPR011856">
    <property type="entry name" value="tRNA_endonuc-like_dom_sf"/>
</dbReference>
<dbReference type="InterPro" id="IPR003509">
    <property type="entry name" value="UPF0102_YraN-like"/>
</dbReference>
<dbReference type="NCBIfam" id="NF009150">
    <property type="entry name" value="PRK12497.1-3"/>
    <property type="match status" value="1"/>
</dbReference>
<dbReference type="NCBIfam" id="NF009154">
    <property type="entry name" value="PRK12497.3-3"/>
    <property type="match status" value="1"/>
</dbReference>
<dbReference type="NCBIfam" id="NF011271">
    <property type="entry name" value="PRK14678.1"/>
    <property type="match status" value="1"/>
</dbReference>
<dbReference type="NCBIfam" id="TIGR00252">
    <property type="entry name" value="YraN family protein"/>
    <property type="match status" value="1"/>
</dbReference>
<dbReference type="PANTHER" id="PTHR34039">
    <property type="entry name" value="UPF0102 PROTEIN YRAN"/>
    <property type="match status" value="1"/>
</dbReference>
<dbReference type="PANTHER" id="PTHR34039:SF1">
    <property type="entry name" value="UPF0102 PROTEIN YRAN"/>
    <property type="match status" value="1"/>
</dbReference>
<dbReference type="Pfam" id="PF02021">
    <property type="entry name" value="UPF0102"/>
    <property type="match status" value="1"/>
</dbReference>
<dbReference type="SUPFAM" id="SSF52980">
    <property type="entry name" value="Restriction endonuclease-like"/>
    <property type="match status" value="1"/>
</dbReference>
<gene>
    <name type="ordered locus">Rcas_2007</name>
</gene>
<protein>
    <recommendedName>
        <fullName evidence="1">UPF0102 protein Rcas_2007</fullName>
    </recommendedName>
</protein>
<proteinExistence type="inferred from homology"/>
<evidence type="ECO:0000255" key="1">
    <source>
        <dbReference type="HAMAP-Rule" id="MF_00048"/>
    </source>
</evidence>
<feature type="chain" id="PRO_1000074819" description="UPF0102 protein Rcas_2007">
    <location>
        <begin position="1"/>
        <end position="124"/>
    </location>
</feature>
<organism>
    <name type="scientific">Roseiflexus castenholzii (strain DSM 13941 / HLO8)</name>
    <dbReference type="NCBI Taxonomy" id="383372"/>
    <lineage>
        <taxon>Bacteria</taxon>
        <taxon>Bacillati</taxon>
        <taxon>Chloroflexota</taxon>
        <taxon>Chloroflexia</taxon>
        <taxon>Chloroflexales</taxon>
        <taxon>Roseiflexineae</taxon>
        <taxon>Roseiflexaceae</taxon>
        <taxon>Roseiflexus</taxon>
    </lineage>
</organism>
<name>Y2007_ROSCS</name>
<keyword id="KW-1185">Reference proteome</keyword>
<comment type="similarity">
    <text evidence="1">Belongs to the UPF0102 family.</text>
</comment>
<accession>A7NKS5</accession>
<reference key="1">
    <citation type="submission" date="2007-08" db="EMBL/GenBank/DDBJ databases">
        <title>Complete sequence of Roseiflexus castenholzii DSM 13941.</title>
        <authorList>
            <consortium name="US DOE Joint Genome Institute"/>
            <person name="Copeland A."/>
            <person name="Lucas S."/>
            <person name="Lapidus A."/>
            <person name="Barry K."/>
            <person name="Glavina del Rio T."/>
            <person name="Dalin E."/>
            <person name="Tice H."/>
            <person name="Pitluck S."/>
            <person name="Thompson L.S."/>
            <person name="Brettin T."/>
            <person name="Bruce D."/>
            <person name="Detter J.C."/>
            <person name="Han C."/>
            <person name="Tapia R."/>
            <person name="Schmutz J."/>
            <person name="Larimer F."/>
            <person name="Land M."/>
            <person name="Hauser L."/>
            <person name="Kyrpides N."/>
            <person name="Mikhailova N."/>
            <person name="Bryant D.A."/>
            <person name="Hanada S."/>
            <person name="Tsukatani Y."/>
            <person name="Richardson P."/>
        </authorList>
    </citation>
    <scope>NUCLEOTIDE SEQUENCE [LARGE SCALE GENOMIC DNA]</scope>
    <source>
        <strain>DSM 13941 / HLO8</strain>
    </source>
</reference>
<sequence length="124" mass="13815">MTGRRTRLGDWGETMAARFLARRGYEVLARKWRCAAGEIDIVARHDGDLVFVEVRTRRGRDPGMAAESITNAKRARLMALADAFLAAHDLPSNTPWRIDVVAISVGLRAQEVSIEHIPYAVEEA</sequence>